<accession>A6VJ76</accession>
<protein>
    <recommendedName>
        <fullName evidence="1">GTP-dependent dephospho-CoA kinase</fullName>
        <ecNumber evidence="1">2.7.1.237</ecNumber>
    </recommendedName>
    <alternativeName>
        <fullName evidence="1">Dephospho-coenzyme A kinase</fullName>
        <shortName evidence="1">DPCK</shortName>
    </alternativeName>
</protein>
<proteinExistence type="inferred from homology"/>
<name>DPCKG_METM7</name>
<dbReference type="EC" id="2.7.1.237" evidence="1"/>
<dbReference type="EMBL" id="CP000745">
    <property type="protein sequence ID" value="ABR66502.1"/>
    <property type="molecule type" value="Genomic_DNA"/>
</dbReference>
<dbReference type="SMR" id="A6VJ76"/>
<dbReference type="STRING" id="426368.MmarC7_1439"/>
<dbReference type="KEGG" id="mmz:MmarC7_1439"/>
<dbReference type="eggNOG" id="arCOG04076">
    <property type="taxonomic scope" value="Archaea"/>
</dbReference>
<dbReference type="HOGENOM" id="CLU_120795_1_0_2"/>
<dbReference type="OrthoDB" id="15447at2157"/>
<dbReference type="UniPathway" id="UPA00241"/>
<dbReference type="GO" id="GO:0005525">
    <property type="term" value="F:GTP binding"/>
    <property type="evidence" value="ECO:0007669"/>
    <property type="project" value="UniProtKB-UniRule"/>
</dbReference>
<dbReference type="GO" id="GO:0016301">
    <property type="term" value="F:kinase activity"/>
    <property type="evidence" value="ECO:0007669"/>
    <property type="project" value="UniProtKB-UniRule"/>
</dbReference>
<dbReference type="GO" id="GO:0015937">
    <property type="term" value="P:coenzyme A biosynthetic process"/>
    <property type="evidence" value="ECO:0007669"/>
    <property type="project" value="UniProtKB-UniRule"/>
</dbReference>
<dbReference type="HAMAP" id="MF_00590">
    <property type="entry name" value="Dephospho_CoA_kinase_GTP_dep"/>
    <property type="match status" value="1"/>
</dbReference>
<dbReference type="InterPro" id="IPR007164">
    <property type="entry name" value="GTP-dep_dephospho-CoA_kin"/>
</dbReference>
<dbReference type="PANTHER" id="PTHR40732:SF1">
    <property type="entry name" value="GTP-DEPENDENT DEPHOSPHO-COA KINASE"/>
    <property type="match status" value="1"/>
</dbReference>
<dbReference type="PANTHER" id="PTHR40732">
    <property type="entry name" value="UPF0218 PROTEIN TK1697"/>
    <property type="match status" value="1"/>
</dbReference>
<dbReference type="Pfam" id="PF04019">
    <property type="entry name" value="DUF359"/>
    <property type="match status" value="1"/>
</dbReference>
<dbReference type="PIRSF" id="PIRSF006533">
    <property type="entry name" value="UCP006533"/>
    <property type="match status" value="1"/>
</dbReference>
<keyword id="KW-0173">Coenzyme A biosynthesis</keyword>
<keyword id="KW-0342">GTP-binding</keyword>
<keyword id="KW-0418">Kinase</keyword>
<keyword id="KW-0547">Nucleotide-binding</keyword>
<keyword id="KW-0808">Transferase</keyword>
<comment type="function">
    <text evidence="1">Catalyzes the GTP-dependent phosphorylation of the 3'-hydroxyl group of dephosphocoenzyme A to form coenzyme A (CoA).</text>
</comment>
<comment type="catalytic activity">
    <reaction evidence="1">
        <text>3'-dephospho-CoA + GTP = GDP + CoA + H(+)</text>
        <dbReference type="Rhea" id="RHEA:61156"/>
        <dbReference type="ChEBI" id="CHEBI:15378"/>
        <dbReference type="ChEBI" id="CHEBI:37565"/>
        <dbReference type="ChEBI" id="CHEBI:57287"/>
        <dbReference type="ChEBI" id="CHEBI:57328"/>
        <dbReference type="ChEBI" id="CHEBI:58189"/>
        <dbReference type="EC" id="2.7.1.237"/>
    </reaction>
</comment>
<comment type="pathway">
    <text evidence="1">Cofactor biosynthesis; coenzyme A biosynthesis.</text>
</comment>
<comment type="similarity">
    <text evidence="1">Belongs to the GTP-dependent DPCK family.</text>
</comment>
<reference key="1">
    <citation type="submission" date="2007-06" db="EMBL/GenBank/DDBJ databases">
        <title>Complete sequence of Methanococcus maripaludis C7.</title>
        <authorList>
            <consortium name="US DOE Joint Genome Institute"/>
            <person name="Copeland A."/>
            <person name="Lucas S."/>
            <person name="Lapidus A."/>
            <person name="Barry K."/>
            <person name="Glavina del Rio T."/>
            <person name="Dalin E."/>
            <person name="Tice H."/>
            <person name="Pitluck S."/>
            <person name="Clum A."/>
            <person name="Schmutz J."/>
            <person name="Larimer F."/>
            <person name="Land M."/>
            <person name="Hauser L."/>
            <person name="Kyrpides N."/>
            <person name="Anderson I."/>
            <person name="Sieprawska-Lupa M."/>
            <person name="Whitman W.B."/>
            <person name="Richardson P."/>
        </authorList>
    </citation>
    <scope>NUCLEOTIDE SEQUENCE [LARGE SCALE GENOMIC DNA]</scope>
    <source>
        <strain>C7 / ATCC BAA-1331</strain>
    </source>
</reference>
<evidence type="ECO:0000255" key="1">
    <source>
        <dbReference type="HAMAP-Rule" id="MF_00590"/>
    </source>
</evidence>
<organism>
    <name type="scientific">Methanococcus maripaludis (strain C7 / ATCC BAA-1331)</name>
    <dbReference type="NCBI Taxonomy" id="426368"/>
    <lineage>
        <taxon>Archaea</taxon>
        <taxon>Methanobacteriati</taxon>
        <taxon>Methanobacteriota</taxon>
        <taxon>Methanomada group</taxon>
        <taxon>Methanococci</taxon>
        <taxon>Methanococcales</taxon>
        <taxon>Methanococcaceae</taxon>
        <taxon>Methanococcus</taxon>
    </lineage>
</organism>
<sequence length="158" mass="18098">MYLLTDEVARELKKPFGKVYKELPSIDGKVVSIGDVTTKHLLSNGIIPNLSILDFKTKRNIPVNIPHKFKTIFEVENPQGCISDEAIERIKYLSTIHDRDMALIIKGEEDLLTIPVIKYFPEDTSVIYGQPDEGMVLLKITDELKQKIEKLLKDMEER</sequence>
<gene>
    <name type="ordered locus">MmarC7_1439</name>
</gene>
<feature type="chain" id="PRO_1000025491" description="GTP-dependent dephospho-CoA kinase">
    <location>
        <begin position="1"/>
        <end position="158"/>
    </location>
</feature>
<feature type="binding site" evidence="1">
    <location>
        <position position="35"/>
    </location>
    <ligand>
        <name>GTP</name>
        <dbReference type="ChEBI" id="CHEBI:37565"/>
    </ligand>
</feature>
<feature type="binding site" evidence="1">
    <location>
        <position position="36"/>
    </location>
    <ligand>
        <name>GTP</name>
        <dbReference type="ChEBI" id="CHEBI:37565"/>
    </ligand>
</feature>
<feature type="binding site" evidence="1">
    <location>
        <position position="54"/>
    </location>
    <ligand>
        <name>GTP</name>
        <dbReference type="ChEBI" id="CHEBI:37565"/>
    </ligand>
</feature>
<feature type="binding site" evidence="1">
    <location>
        <position position="56"/>
    </location>
    <ligand>
        <name>GTP</name>
        <dbReference type="ChEBI" id="CHEBI:37565"/>
    </ligand>
</feature>
<feature type="binding site" evidence="1">
    <location>
        <position position="109"/>
    </location>
    <ligand>
        <name>GTP</name>
        <dbReference type="ChEBI" id="CHEBI:37565"/>
    </ligand>
</feature>
<feature type="binding site" evidence="1">
    <location>
        <position position="132"/>
    </location>
    <ligand>
        <name>GTP</name>
        <dbReference type="ChEBI" id="CHEBI:37565"/>
    </ligand>
</feature>